<protein>
    <recommendedName>
        <fullName>Floral homeotic protein AGAMOUS</fullName>
    </recommendedName>
    <alternativeName>
        <fullName>NAG1</fullName>
    </alternativeName>
</protein>
<gene>
    <name type="primary">AG1</name>
</gene>
<accession>Q43585</accession>
<organism>
    <name type="scientific">Nicotiana tabacum</name>
    <name type="common">Common tobacco</name>
    <dbReference type="NCBI Taxonomy" id="4097"/>
    <lineage>
        <taxon>Eukaryota</taxon>
        <taxon>Viridiplantae</taxon>
        <taxon>Streptophyta</taxon>
        <taxon>Embryophyta</taxon>
        <taxon>Tracheophyta</taxon>
        <taxon>Spermatophyta</taxon>
        <taxon>Magnoliopsida</taxon>
        <taxon>eudicotyledons</taxon>
        <taxon>Gunneridae</taxon>
        <taxon>Pentapetalae</taxon>
        <taxon>asterids</taxon>
        <taxon>lamiids</taxon>
        <taxon>Solanales</taxon>
        <taxon>Solanaceae</taxon>
        <taxon>Nicotianoideae</taxon>
        <taxon>Nicotianeae</taxon>
        <taxon>Nicotiana</taxon>
    </lineage>
</organism>
<sequence length="248" mass="28664">MDFQSDLTREISPQRKLGRGKIEIKRIENTTNRQVTFCKRRNGLLKKAYELSVLCDAEVALIVFSSRGRLYEYANNSVKATIERYKKACSDSSNTGSISEANAQYYQQEASKLRAQIGNLQNQNRNMLGESLAALSLRDLKNLEQKIEKGISKIRSKKNELLFAEIEYMQKREIDLHNNNQYLRAKIAETERAQQQQQQQQMNLMPGSSSYELVPPPHQFDTRNYLQVNGLQTNNHYTRQDQPSLQLV</sequence>
<name>AG_TOBAC</name>
<comment type="function">
    <text evidence="1">Probable transcription factor involved in regulating genes that determines stamen and carpel development in wild-type flowers.</text>
</comment>
<comment type="subcellular location">
    <subcellularLocation>
        <location>Nucleus</location>
    </subcellularLocation>
</comment>
<reference key="1">
    <citation type="journal article" date="1993" name="Plant Physiol.">
        <title>Conversion of perianth into reproductive organs by ectopic expression of the tobacco floral homeotic gene NAG1.</title>
        <authorList>
            <person name="Kempin S.A."/>
            <person name="Mandel M.A."/>
            <person name="Yanofsky M.F."/>
        </authorList>
    </citation>
    <scope>NUCLEOTIDE SEQUENCE [MRNA]</scope>
    <source>
        <strain>cv. Samsun</strain>
        <tissue>Stamen</tissue>
    </source>
</reference>
<feature type="chain" id="PRO_0000199450" description="Floral homeotic protein AGAMOUS">
    <location>
        <begin position="1"/>
        <end position="248"/>
    </location>
</feature>
<feature type="domain" description="MADS-box" evidence="2">
    <location>
        <begin position="19"/>
        <end position="73"/>
    </location>
</feature>
<feature type="domain" description="K-box" evidence="3">
    <location>
        <begin position="103"/>
        <end position="193"/>
    </location>
</feature>
<feature type="region of interest" description="Disordered" evidence="4">
    <location>
        <begin position="196"/>
        <end position="219"/>
    </location>
</feature>
<feature type="compositionally biased region" description="Polar residues" evidence="4">
    <location>
        <begin position="202"/>
        <end position="211"/>
    </location>
</feature>
<keyword id="KW-0010">Activator</keyword>
<keyword id="KW-0238">DNA-binding</keyword>
<keyword id="KW-0539">Nucleus</keyword>
<keyword id="KW-1185">Reference proteome</keyword>
<keyword id="KW-0804">Transcription</keyword>
<keyword id="KW-0805">Transcription regulation</keyword>
<dbReference type="EMBL" id="L23925">
    <property type="protein sequence ID" value="AAA17033.1"/>
    <property type="molecule type" value="mRNA"/>
</dbReference>
<dbReference type="PIR" id="T03592">
    <property type="entry name" value="T03592"/>
</dbReference>
<dbReference type="RefSeq" id="NP_001312829.1">
    <property type="nucleotide sequence ID" value="NM_001325900.1"/>
</dbReference>
<dbReference type="RefSeq" id="XP_016493540.1">
    <property type="nucleotide sequence ID" value="XM_016638054.1"/>
</dbReference>
<dbReference type="SMR" id="Q43585"/>
<dbReference type="STRING" id="4097.Q43585"/>
<dbReference type="PaxDb" id="4097-Q43585"/>
<dbReference type="GeneID" id="107812878"/>
<dbReference type="KEGG" id="nta:107812878"/>
<dbReference type="OMA" id="TIMESQC"/>
<dbReference type="OrthoDB" id="1898716at2759"/>
<dbReference type="Proteomes" id="UP000084051">
    <property type="component" value="Unplaced"/>
</dbReference>
<dbReference type="GO" id="GO:0005634">
    <property type="term" value="C:nucleus"/>
    <property type="evidence" value="ECO:0007669"/>
    <property type="project" value="UniProtKB-SubCell"/>
</dbReference>
<dbReference type="GO" id="GO:0000981">
    <property type="term" value="F:DNA-binding transcription factor activity, RNA polymerase II-specific"/>
    <property type="evidence" value="ECO:0000318"/>
    <property type="project" value="GO_Central"/>
</dbReference>
<dbReference type="GO" id="GO:0046983">
    <property type="term" value="F:protein dimerization activity"/>
    <property type="evidence" value="ECO:0007669"/>
    <property type="project" value="InterPro"/>
</dbReference>
<dbReference type="GO" id="GO:0000978">
    <property type="term" value="F:RNA polymerase II cis-regulatory region sequence-specific DNA binding"/>
    <property type="evidence" value="ECO:0000318"/>
    <property type="project" value="GO_Central"/>
</dbReference>
<dbReference type="GO" id="GO:0045944">
    <property type="term" value="P:positive regulation of transcription by RNA polymerase II"/>
    <property type="evidence" value="ECO:0007669"/>
    <property type="project" value="InterPro"/>
</dbReference>
<dbReference type="GO" id="GO:0006357">
    <property type="term" value="P:regulation of transcription by RNA polymerase II"/>
    <property type="evidence" value="ECO:0000318"/>
    <property type="project" value="GO_Central"/>
</dbReference>
<dbReference type="CDD" id="cd00265">
    <property type="entry name" value="MADS_MEF2_like"/>
    <property type="match status" value="1"/>
</dbReference>
<dbReference type="FunFam" id="3.40.1810.10:FF:000009">
    <property type="entry name" value="agamous-like MADS-box protein AGL11"/>
    <property type="match status" value="1"/>
</dbReference>
<dbReference type="Gene3D" id="3.40.1810.10">
    <property type="entry name" value="Transcription factor, MADS-box"/>
    <property type="match status" value="1"/>
</dbReference>
<dbReference type="InterPro" id="IPR050142">
    <property type="entry name" value="MADS-box/MEF2_TF"/>
</dbReference>
<dbReference type="InterPro" id="IPR033896">
    <property type="entry name" value="MEF2-like_N"/>
</dbReference>
<dbReference type="InterPro" id="IPR002487">
    <property type="entry name" value="TF_Kbox"/>
</dbReference>
<dbReference type="InterPro" id="IPR002100">
    <property type="entry name" value="TF_MADSbox"/>
</dbReference>
<dbReference type="InterPro" id="IPR036879">
    <property type="entry name" value="TF_MADSbox_sf"/>
</dbReference>
<dbReference type="PANTHER" id="PTHR48019">
    <property type="entry name" value="SERUM RESPONSE FACTOR HOMOLOG"/>
    <property type="match status" value="1"/>
</dbReference>
<dbReference type="Pfam" id="PF01486">
    <property type="entry name" value="K-box"/>
    <property type="match status" value="1"/>
</dbReference>
<dbReference type="Pfam" id="PF00319">
    <property type="entry name" value="SRF-TF"/>
    <property type="match status" value="1"/>
</dbReference>
<dbReference type="PRINTS" id="PR00404">
    <property type="entry name" value="MADSDOMAIN"/>
</dbReference>
<dbReference type="SMART" id="SM00432">
    <property type="entry name" value="MADS"/>
    <property type="match status" value="1"/>
</dbReference>
<dbReference type="SUPFAM" id="SSF55455">
    <property type="entry name" value="SRF-like"/>
    <property type="match status" value="1"/>
</dbReference>
<dbReference type="PROSITE" id="PS51297">
    <property type="entry name" value="K_BOX"/>
    <property type="match status" value="1"/>
</dbReference>
<dbReference type="PROSITE" id="PS00350">
    <property type="entry name" value="MADS_BOX_1"/>
    <property type="match status" value="1"/>
</dbReference>
<dbReference type="PROSITE" id="PS50066">
    <property type="entry name" value="MADS_BOX_2"/>
    <property type="match status" value="1"/>
</dbReference>
<evidence type="ECO:0000250" key="1"/>
<evidence type="ECO:0000255" key="2">
    <source>
        <dbReference type="PROSITE-ProRule" id="PRU00251"/>
    </source>
</evidence>
<evidence type="ECO:0000255" key="3">
    <source>
        <dbReference type="PROSITE-ProRule" id="PRU00629"/>
    </source>
</evidence>
<evidence type="ECO:0000256" key="4">
    <source>
        <dbReference type="SAM" id="MobiDB-lite"/>
    </source>
</evidence>
<proteinExistence type="evidence at transcript level"/>